<comment type="function">
    <text evidence="1">The phage shock protein (psp) operon (pspABCDE) may play a significant role in the competition for survival under nutrient- or energy-limited conditions.</text>
</comment>
<comment type="subcellular location">
    <subcellularLocation>
        <location evidence="1">Cytoplasm</location>
    </subcellularLocation>
    <subcellularLocation>
        <location evidence="1">Cell inner membrane</location>
        <topology evidence="1">Peripheral membrane protein</topology>
        <orientation evidence="1">Cytoplasmic side</orientation>
    </subcellularLocation>
</comment>
<comment type="induction">
    <text evidence="1">By heat, ethanol, osmotic shock and infection by filamentous bacteriophages.</text>
</comment>
<comment type="similarity">
    <text evidence="2">Belongs to the PspD family.</text>
</comment>
<gene>
    <name type="primary">pspD</name>
    <name type="ordered locus">Z2478</name>
    <name type="ordered locus">ECs1884</name>
</gene>
<name>PSPD_ECO57</name>
<reference key="1">
    <citation type="journal article" date="2001" name="Nature">
        <title>Genome sequence of enterohaemorrhagic Escherichia coli O157:H7.</title>
        <authorList>
            <person name="Perna N.T."/>
            <person name="Plunkett G. III"/>
            <person name="Burland V."/>
            <person name="Mau B."/>
            <person name="Glasner J.D."/>
            <person name="Rose D.J."/>
            <person name="Mayhew G.F."/>
            <person name="Evans P.S."/>
            <person name="Gregor J."/>
            <person name="Kirkpatrick H.A."/>
            <person name="Posfai G."/>
            <person name="Hackett J."/>
            <person name="Klink S."/>
            <person name="Boutin A."/>
            <person name="Shao Y."/>
            <person name="Miller L."/>
            <person name="Grotbeck E.J."/>
            <person name="Davis N.W."/>
            <person name="Lim A."/>
            <person name="Dimalanta E.T."/>
            <person name="Potamousis K."/>
            <person name="Apodaca J."/>
            <person name="Anantharaman T.S."/>
            <person name="Lin J."/>
            <person name="Yen G."/>
            <person name="Schwartz D.C."/>
            <person name="Welch R.A."/>
            <person name="Blattner F.R."/>
        </authorList>
    </citation>
    <scope>NUCLEOTIDE SEQUENCE [LARGE SCALE GENOMIC DNA]</scope>
    <source>
        <strain>O157:H7 / EDL933 / ATCC 700927 / EHEC</strain>
    </source>
</reference>
<reference key="2">
    <citation type="journal article" date="2001" name="DNA Res.">
        <title>Complete genome sequence of enterohemorrhagic Escherichia coli O157:H7 and genomic comparison with a laboratory strain K-12.</title>
        <authorList>
            <person name="Hayashi T."/>
            <person name="Makino K."/>
            <person name="Ohnishi M."/>
            <person name="Kurokawa K."/>
            <person name="Ishii K."/>
            <person name="Yokoyama K."/>
            <person name="Han C.-G."/>
            <person name="Ohtsubo E."/>
            <person name="Nakayama K."/>
            <person name="Murata T."/>
            <person name="Tanaka M."/>
            <person name="Tobe T."/>
            <person name="Iida T."/>
            <person name="Takami H."/>
            <person name="Honda T."/>
            <person name="Sasakawa C."/>
            <person name="Ogasawara N."/>
            <person name="Yasunaga T."/>
            <person name="Kuhara S."/>
            <person name="Shiba T."/>
            <person name="Hattori M."/>
            <person name="Shinagawa H."/>
        </authorList>
    </citation>
    <scope>NUCLEOTIDE SEQUENCE [LARGE SCALE GENOMIC DNA]</scope>
    <source>
        <strain>O157:H7 / Sakai / RIMD 0509952 / EHEC</strain>
    </source>
</reference>
<accession>P0AFV9</accession>
<accession>P23856</accession>
<evidence type="ECO:0000250" key="1"/>
<evidence type="ECO:0000305" key="2"/>
<dbReference type="EMBL" id="AE005174">
    <property type="protein sequence ID" value="AAG56497.1"/>
    <property type="molecule type" value="Genomic_DNA"/>
</dbReference>
<dbReference type="EMBL" id="BA000007">
    <property type="protein sequence ID" value="BAB35307.1"/>
    <property type="molecule type" value="Genomic_DNA"/>
</dbReference>
<dbReference type="PIR" id="D90864">
    <property type="entry name" value="D90864"/>
</dbReference>
<dbReference type="PIR" id="E85754">
    <property type="entry name" value="E85754"/>
</dbReference>
<dbReference type="RefSeq" id="NP_309911.1">
    <property type="nucleotide sequence ID" value="NC_002695.1"/>
</dbReference>
<dbReference type="RefSeq" id="WP_001295585.1">
    <property type="nucleotide sequence ID" value="NZ_VOAI01000015.1"/>
</dbReference>
<dbReference type="STRING" id="155864.Z2478"/>
<dbReference type="GeneID" id="912668"/>
<dbReference type="GeneID" id="93775433"/>
<dbReference type="KEGG" id="ece:Z2478"/>
<dbReference type="KEGG" id="ecs:ECs_1884"/>
<dbReference type="PATRIC" id="fig|386585.9.peg.1988"/>
<dbReference type="eggNOG" id="ENOG5032YQQ">
    <property type="taxonomic scope" value="Bacteria"/>
</dbReference>
<dbReference type="HOGENOM" id="CLU_182267_0_0_6"/>
<dbReference type="OMA" id="KMNTRWQ"/>
<dbReference type="Proteomes" id="UP000000558">
    <property type="component" value="Chromosome"/>
</dbReference>
<dbReference type="Proteomes" id="UP000002519">
    <property type="component" value="Chromosome"/>
</dbReference>
<dbReference type="GO" id="GO:0005737">
    <property type="term" value="C:cytoplasm"/>
    <property type="evidence" value="ECO:0007669"/>
    <property type="project" value="UniProtKB-SubCell"/>
</dbReference>
<dbReference type="GO" id="GO:0005886">
    <property type="term" value="C:plasma membrane"/>
    <property type="evidence" value="ECO:0007669"/>
    <property type="project" value="UniProtKB-SubCell"/>
</dbReference>
<dbReference type="InterPro" id="IPR014321">
    <property type="entry name" value="Phageshock_PspD"/>
</dbReference>
<dbReference type="NCBIfam" id="TIGR02979">
    <property type="entry name" value="phageshock_pspD"/>
    <property type="match status" value="1"/>
</dbReference>
<dbReference type="NCBIfam" id="NF007795">
    <property type="entry name" value="PRK10497.1"/>
    <property type="match status" value="1"/>
</dbReference>
<dbReference type="Pfam" id="PF09584">
    <property type="entry name" value="Phageshock_PspD"/>
    <property type="match status" value="1"/>
</dbReference>
<proteinExistence type="inferred from homology"/>
<sequence length="73" mass="8042">MNTRWQQAGQKVKPGFKLAGKLVLLTALRYGPAGVAGWAIKSVARRPLKMLLAVALEPLLSRAANKLAQRYKR</sequence>
<keyword id="KW-0997">Cell inner membrane</keyword>
<keyword id="KW-1003">Cell membrane</keyword>
<keyword id="KW-0963">Cytoplasm</keyword>
<keyword id="KW-0472">Membrane</keyword>
<keyword id="KW-1185">Reference proteome</keyword>
<keyword id="KW-0346">Stress response</keyword>
<protein>
    <recommendedName>
        <fullName>Phage shock protein D</fullName>
    </recommendedName>
</protein>
<organism>
    <name type="scientific">Escherichia coli O157:H7</name>
    <dbReference type="NCBI Taxonomy" id="83334"/>
    <lineage>
        <taxon>Bacteria</taxon>
        <taxon>Pseudomonadati</taxon>
        <taxon>Pseudomonadota</taxon>
        <taxon>Gammaproteobacteria</taxon>
        <taxon>Enterobacterales</taxon>
        <taxon>Enterobacteriaceae</taxon>
        <taxon>Escherichia</taxon>
    </lineage>
</organism>
<feature type="chain" id="PRO_0000097079" description="Phage shock protein D">
    <location>
        <begin position="1"/>
        <end position="73"/>
    </location>
</feature>